<organism>
    <name type="scientific">Schizosaccharomyces pombe (strain 972 / ATCC 24843)</name>
    <name type="common">Fission yeast</name>
    <dbReference type="NCBI Taxonomy" id="284812"/>
    <lineage>
        <taxon>Eukaryota</taxon>
        <taxon>Fungi</taxon>
        <taxon>Dikarya</taxon>
        <taxon>Ascomycota</taxon>
        <taxon>Taphrinomycotina</taxon>
        <taxon>Schizosaccharomycetes</taxon>
        <taxon>Schizosaccharomycetales</taxon>
        <taxon>Schizosaccharomycetaceae</taxon>
        <taxon>Schizosaccharomyces</taxon>
    </lineage>
</organism>
<comment type="function">
    <text>Plays a fundamental role as a protein essential for entry into mitosis (G2/M progression) as well as for chromosome segregation during mitosis. May play a role in mitotic spindle formation and/or function. May have a role in the maintenance or establishment of the steady-state level of the APC complex.</text>
</comment>
<comment type="subunit">
    <text evidence="2">Interacts with cut20.</text>
</comment>
<comment type="subcellular location">
    <subcellularLocation>
        <location evidence="1">Nucleus</location>
    </subcellularLocation>
</comment>
<comment type="similarity">
    <text evidence="3">Belongs to the DIM1 family.</text>
</comment>
<gene>
    <name type="primary">dim1</name>
    <name type="ORF">SPCC16A11.05c</name>
</gene>
<sequence length="142" mass="16971">MSYFLPHLHSGWHVDQAILSEQERLVVIRFGRDHDEECIKQDEVLYRIAEKVVNMAVIYLVDIDEVPDFNKMYELYDRTTIMFFYRNKHMMIDLGTGNNNKINWPLEDKQEMIDIIETIFRGARKGKGLVISPKDYSTRHRY</sequence>
<protein>
    <recommendedName>
        <fullName>Mitosis protein dim1</fullName>
    </recommendedName>
</protein>
<name>DIMI_SCHPO</name>
<accession>P87215</accession>
<dbReference type="EMBL" id="AF001214">
    <property type="protein sequence ID" value="AAC49744.1"/>
    <property type="molecule type" value="Genomic_DNA"/>
</dbReference>
<dbReference type="EMBL" id="CU329672">
    <property type="protein sequence ID" value="CAB53077.1"/>
    <property type="molecule type" value="Genomic_DNA"/>
</dbReference>
<dbReference type="PIR" id="T41078">
    <property type="entry name" value="T41078"/>
</dbReference>
<dbReference type="RefSeq" id="NP_587992.1">
    <property type="nucleotide sequence ID" value="NM_001022983.2"/>
</dbReference>
<dbReference type="SMR" id="P87215"/>
<dbReference type="BioGRID" id="275935">
    <property type="interactions" value="34"/>
</dbReference>
<dbReference type="FunCoup" id="P87215">
    <property type="interactions" value="579"/>
</dbReference>
<dbReference type="STRING" id="284812.P87215"/>
<dbReference type="PaxDb" id="4896-SPCC16A11.05c.1"/>
<dbReference type="EnsemblFungi" id="SPCC16A11.05c.1">
    <property type="protein sequence ID" value="SPCC16A11.05c.1:pep"/>
    <property type="gene ID" value="SPCC16A11.05c"/>
</dbReference>
<dbReference type="GeneID" id="2539369"/>
<dbReference type="KEGG" id="spo:2539369"/>
<dbReference type="PomBase" id="SPCC16A11.05c">
    <property type="gene designation" value="dim1"/>
</dbReference>
<dbReference type="VEuPathDB" id="FungiDB:SPCC16A11.05c"/>
<dbReference type="eggNOG" id="KOG3414">
    <property type="taxonomic scope" value="Eukaryota"/>
</dbReference>
<dbReference type="HOGENOM" id="CLU_117348_0_0_1"/>
<dbReference type="InParanoid" id="P87215"/>
<dbReference type="OMA" id="GMYELYD"/>
<dbReference type="PhylomeDB" id="P87215"/>
<dbReference type="PRO" id="PR:P87215"/>
<dbReference type="Proteomes" id="UP000002485">
    <property type="component" value="Chromosome III"/>
</dbReference>
<dbReference type="GO" id="GO:0005681">
    <property type="term" value="C:spliceosomal complex"/>
    <property type="evidence" value="ECO:0000318"/>
    <property type="project" value="GO_Central"/>
</dbReference>
<dbReference type="GO" id="GO:0046540">
    <property type="term" value="C:U4/U6 x U5 tri-snRNP complex"/>
    <property type="evidence" value="ECO:0000318"/>
    <property type="project" value="GO_Central"/>
</dbReference>
<dbReference type="GO" id="GO:0005682">
    <property type="term" value="C:U5 snRNP"/>
    <property type="evidence" value="ECO:0000318"/>
    <property type="project" value="GO_Central"/>
</dbReference>
<dbReference type="GO" id="GO:0045292">
    <property type="term" value="P:mRNA cis splicing, via spliceosome"/>
    <property type="evidence" value="ECO:0000250"/>
    <property type="project" value="PomBase"/>
</dbReference>
<dbReference type="CDD" id="cd02954">
    <property type="entry name" value="DIM1"/>
    <property type="match status" value="1"/>
</dbReference>
<dbReference type="FunFam" id="3.40.30.10:FF:000004">
    <property type="entry name" value="Spliceosomal protein DIB1"/>
    <property type="match status" value="1"/>
</dbReference>
<dbReference type="Gene3D" id="3.40.30.10">
    <property type="entry name" value="Glutaredoxin"/>
    <property type="match status" value="1"/>
</dbReference>
<dbReference type="InterPro" id="IPR004123">
    <property type="entry name" value="Dim1"/>
</dbReference>
<dbReference type="InterPro" id="IPR036249">
    <property type="entry name" value="Thioredoxin-like_sf"/>
</dbReference>
<dbReference type="PANTHER" id="PTHR12052:SF5">
    <property type="entry name" value="THIOREDOXIN-LIKE PROTEIN 4A"/>
    <property type="match status" value="1"/>
</dbReference>
<dbReference type="PANTHER" id="PTHR12052">
    <property type="entry name" value="THIOREDOXIN-LIKE PROTEN 4A, 4B"/>
    <property type="match status" value="1"/>
</dbReference>
<dbReference type="Pfam" id="PF02966">
    <property type="entry name" value="DIM1"/>
    <property type="match status" value="1"/>
</dbReference>
<dbReference type="PIRSF" id="PIRSF017199">
    <property type="entry name" value="mRNA_splic_U5"/>
    <property type="match status" value="1"/>
</dbReference>
<dbReference type="SMART" id="SM01410">
    <property type="entry name" value="DIM1"/>
    <property type="match status" value="1"/>
</dbReference>
<dbReference type="SUPFAM" id="SSF52833">
    <property type="entry name" value="Thioredoxin-like"/>
    <property type="match status" value="1"/>
</dbReference>
<evidence type="ECO:0000250" key="1"/>
<evidence type="ECO:0000269" key="2">
    <source>
    </source>
</evidence>
<evidence type="ECO:0000305" key="3"/>
<keyword id="KW-0507">mRNA processing</keyword>
<keyword id="KW-0508">mRNA splicing</keyword>
<keyword id="KW-0539">Nucleus</keyword>
<keyword id="KW-1185">Reference proteome</keyword>
<reference key="1">
    <citation type="journal article" date="1997" name="J. Cell Biol.">
        <title>Fission yeast dim1(+) encodes a functionally conserved polypeptide essential for mitosis.</title>
        <authorList>
            <person name="Berry L.D."/>
            <person name="Gould K.L."/>
        </authorList>
    </citation>
    <scope>NUCLEOTIDE SEQUENCE [GENOMIC DNA]</scope>
</reference>
<reference key="2">
    <citation type="journal article" date="2002" name="Nature">
        <title>The genome sequence of Schizosaccharomyces pombe.</title>
        <authorList>
            <person name="Wood V."/>
            <person name="Gwilliam R."/>
            <person name="Rajandream M.A."/>
            <person name="Lyne M.H."/>
            <person name="Lyne R."/>
            <person name="Stewart A."/>
            <person name="Sgouros J.G."/>
            <person name="Peat N."/>
            <person name="Hayles J."/>
            <person name="Baker S.G."/>
            <person name="Basham D."/>
            <person name="Bowman S."/>
            <person name="Brooks K."/>
            <person name="Brown D."/>
            <person name="Brown S."/>
            <person name="Chillingworth T."/>
            <person name="Churcher C.M."/>
            <person name="Collins M."/>
            <person name="Connor R."/>
            <person name="Cronin A."/>
            <person name="Davis P."/>
            <person name="Feltwell T."/>
            <person name="Fraser A."/>
            <person name="Gentles S."/>
            <person name="Goble A."/>
            <person name="Hamlin N."/>
            <person name="Harris D.E."/>
            <person name="Hidalgo J."/>
            <person name="Hodgson G."/>
            <person name="Holroyd S."/>
            <person name="Hornsby T."/>
            <person name="Howarth S."/>
            <person name="Huckle E.J."/>
            <person name="Hunt S."/>
            <person name="Jagels K."/>
            <person name="James K.D."/>
            <person name="Jones L."/>
            <person name="Jones M."/>
            <person name="Leather S."/>
            <person name="McDonald S."/>
            <person name="McLean J."/>
            <person name="Mooney P."/>
            <person name="Moule S."/>
            <person name="Mungall K.L."/>
            <person name="Murphy L.D."/>
            <person name="Niblett D."/>
            <person name="Odell C."/>
            <person name="Oliver K."/>
            <person name="O'Neil S."/>
            <person name="Pearson D."/>
            <person name="Quail M.A."/>
            <person name="Rabbinowitsch E."/>
            <person name="Rutherford K.M."/>
            <person name="Rutter S."/>
            <person name="Saunders D."/>
            <person name="Seeger K."/>
            <person name="Sharp S."/>
            <person name="Skelton J."/>
            <person name="Simmonds M.N."/>
            <person name="Squares R."/>
            <person name="Squares S."/>
            <person name="Stevens K."/>
            <person name="Taylor K."/>
            <person name="Taylor R.G."/>
            <person name="Tivey A."/>
            <person name="Walsh S.V."/>
            <person name="Warren T."/>
            <person name="Whitehead S."/>
            <person name="Woodward J.R."/>
            <person name="Volckaert G."/>
            <person name="Aert R."/>
            <person name="Robben J."/>
            <person name="Grymonprez B."/>
            <person name="Weltjens I."/>
            <person name="Vanstreels E."/>
            <person name="Rieger M."/>
            <person name="Schaefer M."/>
            <person name="Mueller-Auer S."/>
            <person name="Gabel C."/>
            <person name="Fuchs M."/>
            <person name="Duesterhoeft A."/>
            <person name="Fritzc C."/>
            <person name="Holzer E."/>
            <person name="Moestl D."/>
            <person name="Hilbert H."/>
            <person name="Borzym K."/>
            <person name="Langer I."/>
            <person name="Beck A."/>
            <person name="Lehrach H."/>
            <person name="Reinhardt R."/>
            <person name="Pohl T.M."/>
            <person name="Eger P."/>
            <person name="Zimmermann W."/>
            <person name="Wedler H."/>
            <person name="Wambutt R."/>
            <person name="Purnelle B."/>
            <person name="Goffeau A."/>
            <person name="Cadieu E."/>
            <person name="Dreano S."/>
            <person name="Gloux S."/>
            <person name="Lelaure V."/>
            <person name="Mottier S."/>
            <person name="Galibert F."/>
            <person name="Aves S.J."/>
            <person name="Xiang Z."/>
            <person name="Hunt C."/>
            <person name="Moore K."/>
            <person name="Hurst S.M."/>
            <person name="Lucas M."/>
            <person name="Rochet M."/>
            <person name="Gaillardin C."/>
            <person name="Tallada V.A."/>
            <person name="Garzon A."/>
            <person name="Thode G."/>
            <person name="Daga R.R."/>
            <person name="Cruzado L."/>
            <person name="Jimenez J."/>
            <person name="Sanchez M."/>
            <person name="del Rey F."/>
            <person name="Benito J."/>
            <person name="Dominguez A."/>
            <person name="Revuelta J.L."/>
            <person name="Moreno S."/>
            <person name="Armstrong J."/>
            <person name="Forsburg S.L."/>
            <person name="Cerutti L."/>
            <person name="Lowe T."/>
            <person name="McCombie W.R."/>
            <person name="Paulsen I."/>
            <person name="Potashkin J."/>
            <person name="Shpakovski G.V."/>
            <person name="Ussery D."/>
            <person name="Barrell B.G."/>
            <person name="Nurse P."/>
        </authorList>
    </citation>
    <scope>NUCLEOTIDE SEQUENCE [LARGE SCALE GENOMIC DNA]</scope>
    <source>
        <strain>972 / ATCC 24843</strain>
    </source>
</reference>
<reference key="3">
    <citation type="journal article" date="1999" name="Mol. Cell. Biol.">
        <title>The Schizosaccharomyces pombe dim1(+) gene interacts with the anaphase-promoting complex or cyclosome (APC/C) component lid1(+) and is required for APC/C function.</title>
        <authorList>
            <person name="Berry L.D."/>
            <person name="Feoktistova A."/>
            <person name="Wright M.D."/>
            <person name="Gould K.L."/>
        </authorList>
    </citation>
    <scope>INTERACTION WITH CUT20</scope>
</reference>
<proteinExistence type="evidence at protein level"/>
<feature type="chain" id="PRO_0000218285" description="Mitosis protein dim1">
    <location>
        <begin position="1"/>
        <end position="142"/>
    </location>
</feature>